<reference key="1">
    <citation type="journal article" date="2007" name="J. Bacteriol.">
        <title>Complete genome sequence of Haemophilus somnus (Histophilus somni) strain 129Pt and comparison to Haemophilus ducreyi 35000HP and Haemophilus influenzae Rd.</title>
        <authorList>
            <person name="Challacombe J.F."/>
            <person name="Duncan A.J."/>
            <person name="Brettin T.S."/>
            <person name="Bruce D."/>
            <person name="Chertkov O."/>
            <person name="Detter J.C."/>
            <person name="Han C.S."/>
            <person name="Misra M."/>
            <person name="Richardson P."/>
            <person name="Tapia R."/>
            <person name="Thayer N."/>
            <person name="Xie G."/>
            <person name="Inzana T.J."/>
        </authorList>
    </citation>
    <scope>NUCLEOTIDE SEQUENCE [LARGE SCALE GENOMIC DNA]</scope>
    <source>
        <strain>129Pt</strain>
    </source>
</reference>
<gene>
    <name evidence="1" type="primary">nagB</name>
    <name type="ordered locus">HS_1027</name>
</gene>
<name>NAGB_HISS1</name>
<accession>Q0I4B9</accession>
<protein>
    <recommendedName>
        <fullName evidence="1">Glucosamine-6-phosphate deaminase</fullName>
        <ecNumber evidence="1">3.5.99.6</ecNumber>
    </recommendedName>
    <alternativeName>
        <fullName evidence="1">GlcN6P deaminase</fullName>
        <shortName evidence="1">GNPDA</shortName>
    </alternativeName>
    <alternativeName>
        <fullName evidence="1">Glucosamine-6-phosphate isomerase</fullName>
    </alternativeName>
</protein>
<dbReference type="EC" id="3.5.99.6" evidence="1"/>
<dbReference type="EMBL" id="CP000436">
    <property type="protein sequence ID" value="ABI25302.1"/>
    <property type="molecule type" value="Genomic_DNA"/>
</dbReference>
<dbReference type="SMR" id="Q0I4B9"/>
<dbReference type="KEGG" id="hso:HS_1027"/>
<dbReference type="eggNOG" id="COG0363">
    <property type="taxonomic scope" value="Bacteria"/>
</dbReference>
<dbReference type="HOGENOM" id="CLU_049611_0_1_6"/>
<dbReference type="UniPathway" id="UPA00629">
    <property type="reaction ID" value="UER00684"/>
</dbReference>
<dbReference type="GO" id="GO:0005737">
    <property type="term" value="C:cytoplasm"/>
    <property type="evidence" value="ECO:0007669"/>
    <property type="project" value="TreeGrafter"/>
</dbReference>
<dbReference type="GO" id="GO:0004342">
    <property type="term" value="F:glucosamine-6-phosphate deaminase activity"/>
    <property type="evidence" value="ECO:0007669"/>
    <property type="project" value="UniProtKB-UniRule"/>
</dbReference>
<dbReference type="GO" id="GO:0042802">
    <property type="term" value="F:identical protein binding"/>
    <property type="evidence" value="ECO:0007669"/>
    <property type="project" value="TreeGrafter"/>
</dbReference>
<dbReference type="GO" id="GO:0005975">
    <property type="term" value="P:carbohydrate metabolic process"/>
    <property type="evidence" value="ECO:0007669"/>
    <property type="project" value="InterPro"/>
</dbReference>
<dbReference type="GO" id="GO:0006043">
    <property type="term" value="P:glucosamine catabolic process"/>
    <property type="evidence" value="ECO:0007669"/>
    <property type="project" value="TreeGrafter"/>
</dbReference>
<dbReference type="GO" id="GO:0006046">
    <property type="term" value="P:N-acetylglucosamine catabolic process"/>
    <property type="evidence" value="ECO:0007669"/>
    <property type="project" value="TreeGrafter"/>
</dbReference>
<dbReference type="GO" id="GO:0019262">
    <property type="term" value="P:N-acetylneuraminate catabolic process"/>
    <property type="evidence" value="ECO:0007669"/>
    <property type="project" value="UniProtKB-UniRule"/>
</dbReference>
<dbReference type="CDD" id="cd01399">
    <property type="entry name" value="GlcN6P_deaminase"/>
    <property type="match status" value="1"/>
</dbReference>
<dbReference type="FunFam" id="3.40.50.1360:FF:000002">
    <property type="entry name" value="Glucosamine-6-phosphate deaminase"/>
    <property type="match status" value="1"/>
</dbReference>
<dbReference type="Gene3D" id="3.40.50.1360">
    <property type="match status" value="1"/>
</dbReference>
<dbReference type="HAMAP" id="MF_01241">
    <property type="entry name" value="GlcN6P_deamin"/>
    <property type="match status" value="1"/>
</dbReference>
<dbReference type="InterPro" id="IPR006148">
    <property type="entry name" value="Glc/Gal-6P_isomerase"/>
</dbReference>
<dbReference type="InterPro" id="IPR004547">
    <property type="entry name" value="Glucosamine6P_isomerase"/>
</dbReference>
<dbReference type="InterPro" id="IPR018321">
    <property type="entry name" value="Glucosamine6P_isomerase_CS"/>
</dbReference>
<dbReference type="InterPro" id="IPR037171">
    <property type="entry name" value="NagB/RpiA_transferase-like"/>
</dbReference>
<dbReference type="NCBIfam" id="TIGR00502">
    <property type="entry name" value="nagB"/>
    <property type="match status" value="1"/>
</dbReference>
<dbReference type="PANTHER" id="PTHR11280">
    <property type="entry name" value="GLUCOSAMINE-6-PHOSPHATE ISOMERASE"/>
    <property type="match status" value="1"/>
</dbReference>
<dbReference type="PANTHER" id="PTHR11280:SF5">
    <property type="entry name" value="GLUCOSAMINE-6-PHOSPHATE ISOMERASE"/>
    <property type="match status" value="1"/>
</dbReference>
<dbReference type="Pfam" id="PF01182">
    <property type="entry name" value="Glucosamine_iso"/>
    <property type="match status" value="1"/>
</dbReference>
<dbReference type="SUPFAM" id="SSF100950">
    <property type="entry name" value="NagB/RpiA/CoA transferase-like"/>
    <property type="match status" value="1"/>
</dbReference>
<dbReference type="PROSITE" id="PS01161">
    <property type="entry name" value="GLC_GALNAC_ISOMERASE"/>
    <property type="match status" value="1"/>
</dbReference>
<organism>
    <name type="scientific">Histophilus somni (strain 129Pt)</name>
    <name type="common">Haemophilus somnus</name>
    <dbReference type="NCBI Taxonomy" id="205914"/>
    <lineage>
        <taxon>Bacteria</taxon>
        <taxon>Pseudomonadati</taxon>
        <taxon>Pseudomonadota</taxon>
        <taxon>Gammaproteobacteria</taxon>
        <taxon>Pasteurellales</taxon>
        <taxon>Pasteurellaceae</taxon>
        <taxon>Histophilus</taxon>
    </lineage>
</organism>
<evidence type="ECO:0000255" key="1">
    <source>
        <dbReference type="HAMAP-Rule" id="MF_01241"/>
    </source>
</evidence>
<keyword id="KW-0021">Allosteric enzyme</keyword>
<keyword id="KW-0119">Carbohydrate metabolism</keyword>
<keyword id="KW-0378">Hydrolase</keyword>
<sequence>MRLIPLKTAQQVSKWAAKHIVDRINTFAPTAERPFVLGLPTGGTPLQTYKELIKLYQAEEVSFKYVVTFNMDEYVGLPKEHPESYHSFMYNNFFNHIDIQPQNINILDGNTDDHDEECRRYEEKIKSYGKINLFMGGVGVDGHIAFNEPASSLASRTRIKTLTEDTLIANSRFFDNDVTKVPKYALTIGVATLLDAEEVMLLVTGHNKALALQAGVEGNVNHFWTISALQLHRHAIFVCDEPATQELKVKTVKYFTELEQRAIHSVLD</sequence>
<feature type="chain" id="PRO_1000066987" description="Glucosamine-6-phosphate deaminase">
    <location>
        <begin position="1"/>
        <end position="268"/>
    </location>
</feature>
<feature type="active site" description="Proton acceptor; for enolization step" evidence="1">
    <location>
        <position position="72"/>
    </location>
</feature>
<feature type="active site" description="For ring-opening step" evidence="1">
    <location>
        <position position="141"/>
    </location>
</feature>
<feature type="active site" description="Proton acceptor; for ring-opening step" evidence="1">
    <location>
        <position position="143"/>
    </location>
</feature>
<feature type="active site" description="For ring-opening step" evidence="1">
    <location>
        <position position="148"/>
    </location>
</feature>
<feature type="site" description="Part of the allosteric site" evidence="1">
    <location>
        <position position="151"/>
    </location>
</feature>
<feature type="site" description="Part of the allosteric site" evidence="1">
    <location>
        <position position="158"/>
    </location>
</feature>
<feature type="site" description="Part of the allosteric site" evidence="1">
    <location>
        <position position="160"/>
    </location>
</feature>
<feature type="site" description="Part of the allosteric site" evidence="1">
    <location>
        <position position="161"/>
    </location>
</feature>
<feature type="site" description="Part of the allosteric site" evidence="1">
    <location>
        <position position="254"/>
    </location>
</feature>
<proteinExistence type="inferred from homology"/>
<comment type="function">
    <text evidence="1">Catalyzes the reversible isomerization-deamination of glucosamine 6-phosphate (GlcN6P) to form fructose 6-phosphate (Fru6P) and ammonium ion.</text>
</comment>
<comment type="catalytic activity">
    <reaction evidence="1">
        <text>alpha-D-glucosamine 6-phosphate + H2O = beta-D-fructose 6-phosphate + NH4(+)</text>
        <dbReference type="Rhea" id="RHEA:12172"/>
        <dbReference type="ChEBI" id="CHEBI:15377"/>
        <dbReference type="ChEBI" id="CHEBI:28938"/>
        <dbReference type="ChEBI" id="CHEBI:57634"/>
        <dbReference type="ChEBI" id="CHEBI:75989"/>
        <dbReference type="EC" id="3.5.99.6"/>
    </reaction>
</comment>
<comment type="activity regulation">
    <text evidence="1">Allosterically activated by N-acetylglucosamine 6-phosphate (GlcNAc6P).</text>
</comment>
<comment type="pathway">
    <text evidence="1">Amino-sugar metabolism; N-acetylneuraminate degradation; D-fructose 6-phosphate from N-acetylneuraminate: step 5/5.</text>
</comment>
<comment type="subunit">
    <text evidence="1">Homohexamer.</text>
</comment>
<comment type="similarity">
    <text evidence="1">Belongs to the glucosamine/galactosamine-6-phosphate isomerase family. NagB subfamily.</text>
</comment>